<reference key="1">
    <citation type="journal article" date="2006" name="Proc. Natl. Acad. Sci. U.S.A.">
        <title>Comparative genomics of the lactic acid bacteria.</title>
        <authorList>
            <person name="Makarova K.S."/>
            <person name="Slesarev A."/>
            <person name="Wolf Y.I."/>
            <person name="Sorokin A."/>
            <person name="Mirkin B."/>
            <person name="Koonin E.V."/>
            <person name="Pavlov A."/>
            <person name="Pavlova N."/>
            <person name="Karamychev V."/>
            <person name="Polouchine N."/>
            <person name="Shakhova V."/>
            <person name="Grigoriev I."/>
            <person name="Lou Y."/>
            <person name="Rohksar D."/>
            <person name="Lucas S."/>
            <person name="Huang K."/>
            <person name="Goodstein D.M."/>
            <person name="Hawkins T."/>
            <person name="Plengvidhya V."/>
            <person name="Welker D."/>
            <person name="Hughes J."/>
            <person name="Goh Y."/>
            <person name="Benson A."/>
            <person name="Baldwin K."/>
            <person name="Lee J.-H."/>
            <person name="Diaz-Muniz I."/>
            <person name="Dosti B."/>
            <person name="Smeianov V."/>
            <person name="Wechter W."/>
            <person name="Barabote R."/>
            <person name="Lorca G."/>
            <person name="Altermann E."/>
            <person name="Barrangou R."/>
            <person name="Ganesan B."/>
            <person name="Xie Y."/>
            <person name="Rawsthorne H."/>
            <person name="Tamir D."/>
            <person name="Parker C."/>
            <person name="Breidt F."/>
            <person name="Broadbent J.R."/>
            <person name="Hutkins R."/>
            <person name="O'Sullivan D."/>
            <person name="Steele J."/>
            <person name="Unlu G."/>
            <person name="Saier M.H. Jr."/>
            <person name="Klaenhammer T."/>
            <person name="Richardson P."/>
            <person name="Kozyavkin S."/>
            <person name="Weimer B.C."/>
            <person name="Mills D.A."/>
        </authorList>
    </citation>
    <scope>NUCLEOTIDE SEQUENCE [LARGE SCALE GENOMIC DNA]</scope>
    <source>
        <strain>ATCC BAA-331 / PSU-1</strain>
    </source>
</reference>
<organism>
    <name type="scientific">Oenococcus oeni (strain ATCC BAA-331 / PSU-1)</name>
    <dbReference type="NCBI Taxonomy" id="203123"/>
    <lineage>
        <taxon>Bacteria</taxon>
        <taxon>Bacillati</taxon>
        <taxon>Bacillota</taxon>
        <taxon>Bacilli</taxon>
        <taxon>Lactobacillales</taxon>
        <taxon>Lactobacillaceae</taxon>
        <taxon>Oenococcus</taxon>
    </lineage>
</organism>
<protein>
    <recommendedName>
        <fullName evidence="1">Protein RecA</fullName>
    </recommendedName>
    <alternativeName>
        <fullName evidence="1">Recombinase A</fullName>
    </alternativeName>
</protein>
<proteinExistence type="inferred from homology"/>
<evidence type="ECO:0000255" key="1">
    <source>
        <dbReference type="HAMAP-Rule" id="MF_00268"/>
    </source>
</evidence>
<evidence type="ECO:0000256" key="2">
    <source>
        <dbReference type="SAM" id="MobiDB-lite"/>
    </source>
</evidence>
<sequence>MASGRKAALDAALKKIEKDFGKGSIMRLGENVHTQVDVISTGSLKLDIALGVGGYPKGRIIEVFGPESSGKTTVALHAAAEVQKQGGTAAYIDAENSLDAKYAQALGVNVDDLLLSQPDTGEQGLEIADDLVNSGAIDLLVIDSVAALVPRAEIEGEMGDSHVGLQARLMSQALRKLAGTLNRTGTIAIFINQIREKIGIMFGNPETTPGGRALKFYSTVRLEVRRSAQIKDGTNIVGNNTKIKVVKNKVAPPFKVAEVDIMYGKGISQTGELIDLAVDKDIINKSGAWYAYQGEKIGQGRVNAISWLDSPEHKKEHDEIFTSVRDQYGIGEKKDSDEDPGDNKKSKDSASDPFDDPNYNPKSSDPGDDLSDDDIY</sequence>
<dbReference type="EMBL" id="CP000411">
    <property type="protein sequence ID" value="ABJ57244.1"/>
    <property type="molecule type" value="Genomic_DNA"/>
</dbReference>
<dbReference type="RefSeq" id="WP_011677691.1">
    <property type="nucleotide sequence ID" value="NC_008528.1"/>
</dbReference>
<dbReference type="SMR" id="Q04E78"/>
<dbReference type="STRING" id="203123.OEOE_1382"/>
<dbReference type="KEGG" id="ooe:OEOE_1382"/>
<dbReference type="PATRIC" id="fig|203123.7.peg.1396"/>
<dbReference type="eggNOG" id="COG0468">
    <property type="taxonomic scope" value="Bacteria"/>
</dbReference>
<dbReference type="HOGENOM" id="CLU_040469_3_2_9"/>
<dbReference type="Proteomes" id="UP000000774">
    <property type="component" value="Chromosome"/>
</dbReference>
<dbReference type="GO" id="GO:0005829">
    <property type="term" value="C:cytosol"/>
    <property type="evidence" value="ECO:0007669"/>
    <property type="project" value="TreeGrafter"/>
</dbReference>
<dbReference type="GO" id="GO:0005524">
    <property type="term" value="F:ATP binding"/>
    <property type="evidence" value="ECO:0007669"/>
    <property type="project" value="UniProtKB-UniRule"/>
</dbReference>
<dbReference type="GO" id="GO:0016887">
    <property type="term" value="F:ATP hydrolysis activity"/>
    <property type="evidence" value="ECO:0007669"/>
    <property type="project" value="InterPro"/>
</dbReference>
<dbReference type="GO" id="GO:0140664">
    <property type="term" value="F:ATP-dependent DNA damage sensor activity"/>
    <property type="evidence" value="ECO:0007669"/>
    <property type="project" value="InterPro"/>
</dbReference>
<dbReference type="GO" id="GO:0003684">
    <property type="term" value="F:damaged DNA binding"/>
    <property type="evidence" value="ECO:0007669"/>
    <property type="project" value="UniProtKB-UniRule"/>
</dbReference>
<dbReference type="GO" id="GO:0003697">
    <property type="term" value="F:single-stranded DNA binding"/>
    <property type="evidence" value="ECO:0007669"/>
    <property type="project" value="UniProtKB-UniRule"/>
</dbReference>
<dbReference type="GO" id="GO:0006310">
    <property type="term" value="P:DNA recombination"/>
    <property type="evidence" value="ECO:0007669"/>
    <property type="project" value="UniProtKB-UniRule"/>
</dbReference>
<dbReference type="GO" id="GO:0006281">
    <property type="term" value="P:DNA repair"/>
    <property type="evidence" value="ECO:0007669"/>
    <property type="project" value="UniProtKB-UniRule"/>
</dbReference>
<dbReference type="GO" id="GO:0009432">
    <property type="term" value="P:SOS response"/>
    <property type="evidence" value="ECO:0007669"/>
    <property type="project" value="UniProtKB-UniRule"/>
</dbReference>
<dbReference type="CDD" id="cd00983">
    <property type="entry name" value="RecA"/>
    <property type="match status" value="1"/>
</dbReference>
<dbReference type="FunFam" id="3.40.50.300:FF:000087">
    <property type="entry name" value="Recombinase RecA"/>
    <property type="match status" value="1"/>
</dbReference>
<dbReference type="Gene3D" id="3.40.50.300">
    <property type="entry name" value="P-loop containing nucleotide triphosphate hydrolases"/>
    <property type="match status" value="1"/>
</dbReference>
<dbReference type="HAMAP" id="MF_00268">
    <property type="entry name" value="RecA"/>
    <property type="match status" value="1"/>
</dbReference>
<dbReference type="InterPro" id="IPR003593">
    <property type="entry name" value="AAA+_ATPase"/>
</dbReference>
<dbReference type="InterPro" id="IPR013765">
    <property type="entry name" value="DNA_recomb/repair_RecA"/>
</dbReference>
<dbReference type="InterPro" id="IPR020584">
    <property type="entry name" value="DNA_recomb/repair_RecA_CS"/>
</dbReference>
<dbReference type="InterPro" id="IPR027417">
    <property type="entry name" value="P-loop_NTPase"/>
</dbReference>
<dbReference type="InterPro" id="IPR049261">
    <property type="entry name" value="RecA-like_C"/>
</dbReference>
<dbReference type="InterPro" id="IPR049428">
    <property type="entry name" value="RecA-like_N"/>
</dbReference>
<dbReference type="InterPro" id="IPR020588">
    <property type="entry name" value="RecA_ATP-bd"/>
</dbReference>
<dbReference type="InterPro" id="IPR023400">
    <property type="entry name" value="RecA_C_sf"/>
</dbReference>
<dbReference type="InterPro" id="IPR020587">
    <property type="entry name" value="RecA_monomer-monomer_interface"/>
</dbReference>
<dbReference type="NCBIfam" id="TIGR02012">
    <property type="entry name" value="tigrfam_recA"/>
    <property type="match status" value="1"/>
</dbReference>
<dbReference type="PANTHER" id="PTHR45900:SF1">
    <property type="entry name" value="MITOCHONDRIAL DNA REPAIR PROTEIN RECA HOMOLOG-RELATED"/>
    <property type="match status" value="1"/>
</dbReference>
<dbReference type="PANTHER" id="PTHR45900">
    <property type="entry name" value="RECA"/>
    <property type="match status" value="1"/>
</dbReference>
<dbReference type="Pfam" id="PF00154">
    <property type="entry name" value="RecA"/>
    <property type="match status" value="1"/>
</dbReference>
<dbReference type="Pfam" id="PF21096">
    <property type="entry name" value="RecA_C"/>
    <property type="match status" value="1"/>
</dbReference>
<dbReference type="PRINTS" id="PR00142">
    <property type="entry name" value="RECA"/>
</dbReference>
<dbReference type="SMART" id="SM00382">
    <property type="entry name" value="AAA"/>
    <property type="match status" value="1"/>
</dbReference>
<dbReference type="SUPFAM" id="SSF52540">
    <property type="entry name" value="P-loop containing nucleoside triphosphate hydrolases"/>
    <property type="match status" value="1"/>
</dbReference>
<dbReference type="SUPFAM" id="SSF54752">
    <property type="entry name" value="RecA protein, C-terminal domain"/>
    <property type="match status" value="1"/>
</dbReference>
<dbReference type="PROSITE" id="PS00321">
    <property type="entry name" value="RECA_1"/>
    <property type="match status" value="1"/>
</dbReference>
<dbReference type="PROSITE" id="PS50162">
    <property type="entry name" value="RECA_2"/>
    <property type="match status" value="1"/>
</dbReference>
<dbReference type="PROSITE" id="PS50163">
    <property type="entry name" value="RECA_3"/>
    <property type="match status" value="1"/>
</dbReference>
<name>RECA_OENOB</name>
<gene>
    <name evidence="1" type="primary">recA</name>
    <name type="ordered locus">OEOE_1382</name>
</gene>
<comment type="function">
    <text evidence="1">Can catalyze the hydrolysis of ATP in the presence of single-stranded DNA, the ATP-dependent uptake of single-stranded DNA by duplex DNA, and the ATP-dependent hybridization of homologous single-stranded DNAs. It interacts with LexA causing its activation and leading to its autocatalytic cleavage.</text>
</comment>
<comment type="subcellular location">
    <subcellularLocation>
        <location evidence="1">Cytoplasm</location>
    </subcellularLocation>
</comment>
<comment type="similarity">
    <text evidence="1">Belongs to the RecA family.</text>
</comment>
<feature type="chain" id="PRO_1000047958" description="Protein RecA">
    <location>
        <begin position="1"/>
        <end position="376"/>
    </location>
</feature>
<feature type="region of interest" description="Disordered" evidence="2">
    <location>
        <begin position="316"/>
        <end position="376"/>
    </location>
</feature>
<feature type="compositionally biased region" description="Basic and acidic residues" evidence="2">
    <location>
        <begin position="331"/>
        <end position="350"/>
    </location>
</feature>
<feature type="compositionally biased region" description="Acidic residues" evidence="2">
    <location>
        <begin position="366"/>
        <end position="376"/>
    </location>
</feature>
<feature type="binding site" evidence="1">
    <location>
        <begin position="65"/>
        <end position="72"/>
    </location>
    <ligand>
        <name>ATP</name>
        <dbReference type="ChEBI" id="CHEBI:30616"/>
    </ligand>
</feature>
<keyword id="KW-0067">ATP-binding</keyword>
<keyword id="KW-0963">Cytoplasm</keyword>
<keyword id="KW-0227">DNA damage</keyword>
<keyword id="KW-0233">DNA recombination</keyword>
<keyword id="KW-0234">DNA repair</keyword>
<keyword id="KW-0238">DNA-binding</keyword>
<keyword id="KW-0547">Nucleotide-binding</keyword>
<keyword id="KW-1185">Reference proteome</keyword>
<keyword id="KW-0742">SOS response</keyword>
<accession>Q04E78</accession>